<name>DEFL_STAAW</name>
<gene>
    <name type="ordered locus">MW1098</name>
</gene>
<reference key="1">
    <citation type="journal article" date="2002" name="Lancet">
        <title>Genome and virulence determinants of high virulence community-acquired MRSA.</title>
        <authorList>
            <person name="Baba T."/>
            <person name="Takeuchi F."/>
            <person name="Kuroda M."/>
            <person name="Yuzawa H."/>
            <person name="Aoki K."/>
            <person name="Oguchi A."/>
            <person name="Nagai Y."/>
            <person name="Iwama N."/>
            <person name="Asano K."/>
            <person name="Naimi T."/>
            <person name="Kuroda H."/>
            <person name="Cui L."/>
            <person name="Yamamoto K."/>
            <person name="Hiramatsu K."/>
        </authorList>
    </citation>
    <scope>NUCLEOTIDE SEQUENCE [LARGE SCALE GENOMIC DNA]</scope>
    <source>
        <strain>MW2</strain>
    </source>
</reference>
<protein>
    <recommendedName>
        <fullName evidence="1">Peptide deformylase-like</fullName>
    </recommendedName>
    <alternativeName>
        <fullName evidence="1">Polypeptide deformylase-like</fullName>
    </alternativeName>
</protein>
<comment type="similarity">
    <text evidence="1">Belongs to the polypeptide deformylase family.</text>
</comment>
<feature type="chain" id="PRO_0000082901" description="Peptide deformylase-like">
    <location>
        <begin position="1"/>
        <end position="162"/>
    </location>
</feature>
<sequence length="162" mass="18114">MAIKKLVPASHPILTKKAQAVIKFDDSLKRLLQDLEDTMYAQEAAGLCAPQINQSLQVAIIDMEMEGLLQLVNPKIISQSNETITDLEGSITLPDVYGEVTRSKMIVVESYDVNGNKVELTAHEDVARMILHIIDQMNGIPFTERADRILTDKEVEAYFIND</sequence>
<organism>
    <name type="scientific">Staphylococcus aureus (strain MW2)</name>
    <dbReference type="NCBI Taxonomy" id="196620"/>
    <lineage>
        <taxon>Bacteria</taxon>
        <taxon>Bacillati</taxon>
        <taxon>Bacillota</taxon>
        <taxon>Bacilli</taxon>
        <taxon>Bacillales</taxon>
        <taxon>Staphylococcaceae</taxon>
        <taxon>Staphylococcus</taxon>
    </lineage>
</organism>
<proteinExistence type="inferred from homology"/>
<accession>Q8NX19</accession>
<evidence type="ECO:0000255" key="1">
    <source>
        <dbReference type="HAMAP-Rule" id="MF_00163"/>
    </source>
</evidence>
<dbReference type="EMBL" id="BA000033">
    <property type="protein sequence ID" value="BAB94963.1"/>
    <property type="molecule type" value="Genomic_DNA"/>
</dbReference>
<dbReference type="RefSeq" id="WP_000985287.1">
    <property type="nucleotide sequence ID" value="NC_003923.1"/>
</dbReference>
<dbReference type="SMR" id="Q8NX19"/>
<dbReference type="KEGG" id="sam:MW1098"/>
<dbReference type="HOGENOM" id="CLU_061901_4_1_9"/>
<dbReference type="GO" id="GO:0042586">
    <property type="term" value="F:peptide deformylase activity"/>
    <property type="evidence" value="ECO:0007669"/>
    <property type="project" value="UniProtKB-UniRule"/>
</dbReference>
<dbReference type="GO" id="GO:0043686">
    <property type="term" value="P:co-translational protein modification"/>
    <property type="evidence" value="ECO:0007669"/>
    <property type="project" value="TreeGrafter"/>
</dbReference>
<dbReference type="GO" id="GO:0006412">
    <property type="term" value="P:translation"/>
    <property type="evidence" value="ECO:0007669"/>
    <property type="project" value="UniProtKB-UniRule"/>
</dbReference>
<dbReference type="CDD" id="cd00487">
    <property type="entry name" value="Pep_deformylase"/>
    <property type="match status" value="1"/>
</dbReference>
<dbReference type="Gene3D" id="3.90.45.10">
    <property type="entry name" value="Peptide deformylase"/>
    <property type="match status" value="1"/>
</dbReference>
<dbReference type="HAMAP" id="MF_00163">
    <property type="entry name" value="Pep_deformylase"/>
    <property type="match status" value="1"/>
</dbReference>
<dbReference type="InterPro" id="IPR023635">
    <property type="entry name" value="Peptide_deformylase"/>
</dbReference>
<dbReference type="InterPro" id="IPR036821">
    <property type="entry name" value="Peptide_deformylase_sf"/>
</dbReference>
<dbReference type="NCBIfam" id="TIGR00079">
    <property type="entry name" value="pept_deformyl"/>
    <property type="match status" value="1"/>
</dbReference>
<dbReference type="NCBIfam" id="NF011189">
    <property type="entry name" value="PRK14595.1"/>
    <property type="match status" value="1"/>
</dbReference>
<dbReference type="PANTHER" id="PTHR10458">
    <property type="entry name" value="PEPTIDE DEFORMYLASE"/>
    <property type="match status" value="1"/>
</dbReference>
<dbReference type="PANTHER" id="PTHR10458:SF22">
    <property type="entry name" value="PEPTIDE DEFORMYLASE"/>
    <property type="match status" value="1"/>
</dbReference>
<dbReference type="Pfam" id="PF01327">
    <property type="entry name" value="Pep_deformylase"/>
    <property type="match status" value="1"/>
</dbReference>
<dbReference type="PIRSF" id="PIRSF004749">
    <property type="entry name" value="Pep_def"/>
    <property type="match status" value="1"/>
</dbReference>
<dbReference type="PRINTS" id="PR01576">
    <property type="entry name" value="PDEFORMYLASE"/>
</dbReference>
<dbReference type="SUPFAM" id="SSF56420">
    <property type="entry name" value="Peptide deformylase"/>
    <property type="match status" value="1"/>
</dbReference>